<comment type="catalytic activity">
    <reaction>
        <text>(1,4-alpha-D-galacturonosyl)n+m + H2O = (1,4-alpha-D-galacturonosyl)n + (1,4-alpha-D-galacturonosyl)m.</text>
        <dbReference type="EC" id="3.2.1.15"/>
    </reaction>
</comment>
<comment type="subcellular location">
    <subcellularLocation>
        <location>Secreted</location>
    </subcellularLocation>
    <subcellularLocation>
        <location>Secreted</location>
        <location>Cell wall</location>
    </subcellularLocation>
</comment>
<comment type="allergen">
    <text>Causes an allergic reaction in human.</text>
</comment>
<comment type="similarity">
    <text evidence="4">Belongs to the glycosyl hydrolase 28 family.</text>
</comment>
<keyword id="KW-0020">Allergen</keyword>
<keyword id="KW-0134">Cell wall</keyword>
<keyword id="KW-0961">Cell wall biogenesis/degradation</keyword>
<keyword id="KW-0903">Direct protein sequencing</keyword>
<keyword id="KW-0292">Fruit ripening</keyword>
<keyword id="KW-0325">Glycoprotein</keyword>
<keyword id="KW-0326">Glycosidase</keyword>
<keyword id="KW-0378">Hydrolase</keyword>
<keyword id="KW-0677">Repeat</keyword>
<keyword id="KW-0964">Secreted</keyword>
<keyword id="KW-0732">Signal</keyword>
<keyword id="KW-0865">Zymogen</keyword>
<organism>
    <name type="scientific">Juniperus ashei</name>
    <name type="common">Ozark white cedar</name>
    <dbReference type="NCBI Taxonomy" id="13101"/>
    <lineage>
        <taxon>Eukaryota</taxon>
        <taxon>Viridiplantae</taxon>
        <taxon>Streptophyta</taxon>
        <taxon>Embryophyta</taxon>
        <taxon>Tracheophyta</taxon>
        <taxon>Spermatophyta</taxon>
        <taxon>Pinopsida</taxon>
        <taxon>Pinidae</taxon>
        <taxon>Conifers II</taxon>
        <taxon>Cupressales</taxon>
        <taxon>Cupressaceae</taxon>
        <taxon>Juniperus</taxon>
    </lineage>
</organism>
<name>PGLR2_JUNAS</name>
<protein>
    <recommendedName>
        <fullName>Polygalacturonase</fullName>
        <shortName>PG</shortName>
        <ecNumber>3.2.1.15</ecNumber>
    </recommendedName>
    <alternativeName>
        <fullName>Major pollen allergen Jun a 2</fullName>
    </alternativeName>
    <alternativeName>
        <fullName>Pectinase</fullName>
    </alternativeName>
    <allergenName>Jun a 2</allergenName>
</protein>
<accession>Q9FY19</accession>
<dbReference type="EC" id="3.2.1.15"/>
<dbReference type="EMBL" id="AJ404653">
    <property type="protein sequence ID" value="CAC05582.1"/>
    <property type="molecule type" value="mRNA"/>
</dbReference>
<dbReference type="PIR" id="JC7366">
    <property type="entry name" value="JC7366"/>
</dbReference>
<dbReference type="SMR" id="Q9FY19"/>
<dbReference type="Allergome" id="3339">
    <property type="allergen name" value="Jun a 2.0101"/>
</dbReference>
<dbReference type="Allergome" id="428">
    <property type="allergen name" value="Jun a 2"/>
</dbReference>
<dbReference type="CAZy" id="GH28">
    <property type="family name" value="Glycoside Hydrolase Family 28"/>
</dbReference>
<dbReference type="GlyCosmos" id="Q9FY19">
    <property type="glycosylation" value="1 site, No reported glycans"/>
</dbReference>
<dbReference type="GO" id="GO:0005576">
    <property type="term" value="C:extracellular region"/>
    <property type="evidence" value="ECO:0007669"/>
    <property type="project" value="UniProtKB-SubCell"/>
</dbReference>
<dbReference type="GO" id="GO:0004650">
    <property type="term" value="F:polygalacturonase activity"/>
    <property type="evidence" value="ECO:0007669"/>
    <property type="project" value="UniProtKB-EC"/>
</dbReference>
<dbReference type="GO" id="GO:0005975">
    <property type="term" value="P:carbohydrate metabolic process"/>
    <property type="evidence" value="ECO:0007669"/>
    <property type="project" value="InterPro"/>
</dbReference>
<dbReference type="GO" id="GO:0071555">
    <property type="term" value="P:cell wall organization"/>
    <property type="evidence" value="ECO:0007669"/>
    <property type="project" value="UniProtKB-KW"/>
</dbReference>
<dbReference type="GO" id="GO:0009835">
    <property type="term" value="P:fruit ripening"/>
    <property type="evidence" value="ECO:0007669"/>
    <property type="project" value="UniProtKB-KW"/>
</dbReference>
<dbReference type="FunFam" id="2.160.20.10:FF:000032">
    <property type="entry name" value="Pectin lyase-like superfamily protein"/>
    <property type="match status" value="1"/>
</dbReference>
<dbReference type="Gene3D" id="2.160.20.10">
    <property type="entry name" value="Single-stranded right-handed beta-helix, Pectin lyase-like"/>
    <property type="match status" value="1"/>
</dbReference>
<dbReference type="InterPro" id="IPR000743">
    <property type="entry name" value="Glyco_hydro_28"/>
</dbReference>
<dbReference type="InterPro" id="IPR006626">
    <property type="entry name" value="PbH1"/>
</dbReference>
<dbReference type="InterPro" id="IPR012334">
    <property type="entry name" value="Pectin_lyas_fold"/>
</dbReference>
<dbReference type="InterPro" id="IPR011050">
    <property type="entry name" value="Pectin_lyase_fold/virulence"/>
</dbReference>
<dbReference type="PANTHER" id="PTHR31375">
    <property type="match status" value="1"/>
</dbReference>
<dbReference type="Pfam" id="PF17181">
    <property type="entry name" value="EPF"/>
    <property type="match status" value="1"/>
</dbReference>
<dbReference type="Pfam" id="PF00295">
    <property type="entry name" value="Glyco_hydro_28"/>
    <property type="match status" value="1"/>
</dbReference>
<dbReference type="SMART" id="SM00710">
    <property type="entry name" value="PbH1"/>
    <property type="match status" value="6"/>
</dbReference>
<dbReference type="SUPFAM" id="SSF51126">
    <property type="entry name" value="Pectin lyase-like"/>
    <property type="match status" value="1"/>
</dbReference>
<dbReference type="PROSITE" id="PS00502">
    <property type="entry name" value="POLYGALACTURONASE"/>
    <property type="match status" value="1"/>
</dbReference>
<feature type="signal peptide" evidence="1">
    <location>
        <begin position="1"/>
        <end position="20"/>
    </location>
</feature>
<feature type="propeptide" id="PRO_0000024819" evidence="3">
    <location>
        <begin position="21"/>
        <end position="54"/>
    </location>
</feature>
<feature type="chain" id="PRO_0000024820" description="Polygalacturonase">
    <location>
        <begin position="55"/>
        <end position="507"/>
    </location>
</feature>
<feature type="repeat" description="PbH1 1">
    <location>
        <begin position="215"/>
        <end position="241"/>
    </location>
</feature>
<feature type="repeat" description="PbH1 2">
    <location>
        <begin position="242"/>
        <end position="263"/>
    </location>
</feature>
<feature type="repeat" description="PbH1 3">
    <location>
        <begin position="265"/>
        <end position="285"/>
    </location>
</feature>
<feature type="repeat" description="PbH1 4">
    <location>
        <begin position="295"/>
        <end position="316"/>
    </location>
</feature>
<feature type="repeat" description="PbH1 5">
    <location>
        <begin position="324"/>
        <end position="345"/>
    </location>
</feature>
<feature type="repeat" description="PbH1 6">
    <location>
        <begin position="358"/>
        <end position="385"/>
    </location>
</feature>
<feature type="active site" description="Proton donor" evidence="2">
    <location>
        <position position="256"/>
    </location>
</feature>
<feature type="active site" evidence="2">
    <location>
        <position position="279"/>
    </location>
</feature>
<feature type="glycosylation site" description="N-linked (GlcNAc...) asparagine" evidence="1">
    <location>
        <position position="267"/>
    </location>
</feature>
<sequence>MSMKFMAALAFLALQLIVMAAGEDQSAQIMLDSDTKQYHRSSRNLRKRVHHARHDVAIVFNVEHYGAVGDGKHDSTDAFEKTWNAACNKLSAVFLVPANKKFVVNNLVFYGPCQPHFSFKVDGTIAAYPDPAKWKNSKIWMHFARLTDFNLMGTGVIDGQGNRWWSDQCKTINGRTVCNDKGRPTAIKIDFSKSVTVKELTLTNSPEFHLVFGECDGVKIQGIKIKAPRDSPNTDGIDIFASKRFEIEKCTIGTGDDCVAVGTGSSNITIKDLTCGPGHGMSIGSLGKGNSRSEVSFVHLDGAKFIDTQNGLRIKTWQGGSGLASHITYENVEMINAENPILINQFYCTSAAACKNQRSAVKIQDVTFKNIHGTSATTAAIQLMCSDSVPCSNIKLSNVFLKLTSGKVATCVNKNANGYYTNPLNPSCKSLHPGRTPKELELHQKPTTLLMDEKMGASLNSSPPNCKNKCKGCQPCKPKLIIVHPNQPEDYYPQRWVCSCHNKIYNP</sequence>
<reference key="1">
    <citation type="journal article" date="2000" name="Biochem. Biophys. Res. Commun.">
        <title>Purification, Identification and cDNA cloning of Jun a 2, the second major allergen of mountain cedar pollen.</title>
        <authorList>
            <person name="Yokoyama M."/>
            <person name="Miyahara M."/>
            <person name="Shimizu K."/>
            <person name="Kino K."/>
            <person name="Tsunoo H."/>
        </authorList>
    </citation>
    <scope>NUCLEOTIDE SEQUENCE [MRNA]</scope>
    <scope>PROTEIN SEQUENCE OF 55-63</scope>
    <source>
        <tissue>Pollen</tissue>
    </source>
</reference>
<gene>
    <name type="primary">JNA2</name>
</gene>
<evidence type="ECO:0000255" key="1"/>
<evidence type="ECO:0000255" key="2">
    <source>
        <dbReference type="PROSITE-ProRule" id="PRU10052"/>
    </source>
</evidence>
<evidence type="ECO:0000269" key="3">
    <source>
    </source>
</evidence>
<evidence type="ECO:0000305" key="4"/>
<proteinExistence type="evidence at protein level"/>